<accession>P26465</accession>
<sequence length="456" mass="49265">MTTRLTRWLTALDNFEAKMALLPAVRRYGRLTRATGLVLEATGLQLPLGATCIIERQDGPETKEVESEVVGFNGQRLFLMPLEEVEGILPGARVYARNGHGDGLQSGKQLPLGPALLGRVLDGGGKPLDGLPAPDTLETGALITPPFNPLQRTPIEHVLDTGVRAINALLTVGRGQRMGLFAGSGVGKSVLLGMMARYTRADVIVVGLIGERGREVKDFIENILGPDGRARSVVIAAPADVSPLLRMQGAAYATRIAEDFRDRGQHVLLIMDSLTRYAMAQREIALAIGEPPATKGYPPSVFAKLPALVERAGNGIHGGGSITAFYTVLTEGDDQQDPIADSARAILDGHIVLSRRLAEAGHYPAIDIEASISRAMTALITEQHYARVRLFKQLLSSFQRNRDLVSVGAYAKGSDPMLDKAITLWPQLEAFLQQGIFERADWEDSLQALDLIFPTV</sequence>
<organism>
    <name type="scientific">Salmonella typhimurium (strain LT2 / SGSC1412 / ATCC 700720)</name>
    <dbReference type="NCBI Taxonomy" id="99287"/>
    <lineage>
        <taxon>Bacteria</taxon>
        <taxon>Pseudomonadati</taxon>
        <taxon>Pseudomonadota</taxon>
        <taxon>Gammaproteobacteria</taxon>
        <taxon>Enterobacterales</taxon>
        <taxon>Enterobacteriaceae</taxon>
        <taxon>Salmonella</taxon>
    </lineage>
</organism>
<dbReference type="EC" id="7.1.2.2"/>
<dbReference type="EMBL" id="M62408">
    <property type="protein sequence ID" value="AAA27101.1"/>
    <property type="molecule type" value="Genomic_DNA"/>
</dbReference>
<dbReference type="EMBL" id="AE006468">
    <property type="protein sequence ID" value="AAL20884.1"/>
    <property type="molecule type" value="Genomic_DNA"/>
</dbReference>
<dbReference type="PIR" id="C42364">
    <property type="entry name" value="C42364"/>
</dbReference>
<dbReference type="RefSeq" id="NP_460925.1">
    <property type="nucleotide sequence ID" value="NC_003197.2"/>
</dbReference>
<dbReference type="RefSeq" id="WP_000213257.1">
    <property type="nucleotide sequence ID" value="NC_003197.2"/>
</dbReference>
<dbReference type="PDB" id="2DPY">
    <property type="method" value="X-ray"/>
    <property type="resolution" value="2.40 A"/>
    <property type="chains" value="A/B=19-456"/>
</dbReference>
<dbReference type="PDB" id="5B0O">
    <property type="method" value="X-ray"/>
    <property type="resolution" value="3.00 A"/>
    <property type="chains" value="A/B/C/D=1-456"/>
</dbReference>
<dbReference type="PDB" id="5KP0">
    <property type="method" value="NMR"/>
    <property type="chains" value="A=1-25"/>
</dbReference>
<dbReference type="PDBsum" id="2DPY"/>
<dbReference type="PDBsum" id="5B0O"/>
<dbReference type="PDBsum" id="5KP0"/>
<dbReference type="SMR" id="P26465"/>
<dbReference type="DIP" id="DIP-59076N"/>
<dbReference type="IntAct" id="P26465">
    <property type="interactions" value="3"/>
</dbReference>
<dbReference type="STRING" id="99287.STM1972"/>
<dbReference type="TCDB" id="3.A.6.2.1">
    <property type="family name" value="the type iii (virulence-related) secretory pathway (iiisp) family"/>
</dbReference>
<dbReference type="PaxDb" id="99287-STM1972"/>
<dbReference type="GeneID" id="1253493"/>
<dbReference type="KEGG" id="stm:STM1972"/>
<dbReference type="PATRIC" id="fig|99287.12.peg.2089"/>
<dbReference type="HOGENOM" id="CLU_022398_5_1_6"/>
<dbReference type="OMA" id="DVMLMMD"/>
<dbReference type="PhylomeDB" id="P26465"/>
<dbReference type="BioCyc" id="SENT99287:STM1972-MONOMER"/>
<dbReference type="EvolutionaryTrace" id="P26465"/>
<dbReference type="Proteomes" id="UP000001014">
    <property type="component" value="Chromosome"/>
</dbReference>
<dbReference type="GO" id="GO:0005737">
    <property type="term" value="C:cytoplasm"/>
    <property type="evidence" value="ECO:0007669"/>
    <property type="project" value="UniProtKB-SubCell"/>
</dbReference>
<dbReference type="GO" id="GO:0030257">
    <property type="term" value="C:type III protein secretion system complex"/>
    <property type="evidence" value="ECO:0007669"/>
    <property type="project" value="InterPro"/>
</dbReference>
<dbReference type="GO" id="GO:0005524">
    <property type="term" value="F:ATP binding"/>
    <property type="evidence" value="ECO:0007669"/>
    <property type="project" value="UniProtKB-KW"/>
</dbReference>
<dbReference type="GO" id="GO:0016887">
    <property type="term" value="F:ATP hydrolysis activity"/>
    <property type="evidence" value="ECO:0007669"/>
    <property type="project" value="InterPro"/>
</dbReference>
<dbReference type="GO" id="GO:0042802">
    <property type="term" value="F:identical protein binding"/>
    <property type="evidence" value="ECO:0000353"/>
    <property type="project" value="IntAct"/>
</dbReference>
<dbReference type="GO" id="GO:0044780">
    <property type="term" value="P:bacterial-type flagellum assembly"/>
    <property type="evidence" value="ECO:0007669"/>
    <property type="project" value="InterPro"/>
</dbReference>
<dbReference type="GO" id="GO:0071973">
    <property type="term" value="P:bacterial-type flagellum-dependent cell motility"/>
    <property type="evidence" value="ECO:0007669"/>
    <property type="project" value="InterPro"/>
</dbReference>
<dbReference type="GO" id="GO:0030254">
    <property type="term" value="P:protein secretion by the type III secretion system"/>
    <property type="evidence" value="ECO:0007669"/>
    <property type="project" value="InterPro"/>
</dbReference>
<dbReference type="GO" id="GO:0015986">
    <property type="term" value="P:proton motive force-driven ATP synthesis"/>
    <property type="evidence" value="ECO:0007669"/>
    <property type="project" value="GOC"/>
</dbReference>
<dbReference type="GO" id="GO:1902600">
    <property type="term" value="P:proton transmembrane transport"/>
    <property type="evidence" value="ECO:0007669"/>
    <property type="project" value="UniProtKB-KW"/>
</dbReference>
<dbReference type="CDD" id="cd18114">
    <property type="entry name" value="ATP-synt_flagellum-secretory_path_III_C"/>
    <property type="match status" value="1"/>
</dbReference>
<dbReference type="CDD" id="cd18117">
    <property type="entry name" value="ATP-synt_flagellum-secretory_path_III_N"/>
    <property type="match status" value="1"/>
</dbReference>
<dbReference type="CDD" id="cd01136">
    <property type="entry name" value="ATPase_flagellum-secretory_path_III"/>
    <property type="match status" value="1"/>
</dbReference>
<dbReference type="FunFam" id="3.40.50.12240:FF:000002">
    <property type="entry name" value="Flagellum-specific ATP synthase FliI"/>
    <property type="match status" value="1"/>
</dbReference>
<dbReference type="Gene3D" id="3.40.50.12240">
    <property type="match status" value="1"/>
</dbReference>
<dbReference type="InterPro" id="IPR003593">
    <property type="entry name" value="AAA+_ATPase"/>
</dbReference>
<dbReference type="InterPro" id="IPR020003">
    <property type="entry name" value="ATPase_a/bsu_AS"/>
</dbReference>
<dbReference type="InterPro" id="IPR050053">
    <property type="entry name" value="ATPase_alpha/beta_chains"/>
</dbReference>
<dbReference type="InterPro" id="IPR000194">
    <property type="entry name" value="ATPase_F1/V1/A1_a/bsu_nucl-bd"/>
</dbReference>
<dbReference type="InterPro" id="IPR005714">
    <property type="entry name" value="ATPase_T3SS_FliI/YscN"/>
</dbReference>
<dbReference type="InterPro" id="IPR020005">
    <property type="entry name" value="FliI_clade1"/>
</dbReference>
<dbReference type="InterPro" id="IPR027417">
    <property type="entry name" value="P-loop_NTPase"/>
</dbReference>
<dbReference type="InterPro" id="IPR040627">
    <property type="entry name" value="T3SS_ATPase_C"/>
</dbReference>
<dbReference type="NCBIfam" id="TIGR03496">
    <property type="entry name" value="FliI_clade1"/>
    <property type="match status" value="1"/>
</dbReference>
<dbReference type="NCBIfam" id="TIGR01026">
    <property type="entry name" value="fliI_yscN"/>
    <property type="match status" value="1"/>
</dbReference>
<dbReference type="PANTHER" id="PTHR15184">
    <property type="entry name" value="ATP SYNTHASE"/>
    <property type="match status" value="1"/>
</dbReference>
<dbReference type="PANTHER" id="PTHR15184:SF81">
    <property type="entry name" value="FLAGELLUM-SPECIFIC ATP SYNTHASE"/>
    <property type="match status" value="1"/>
</dbReference>
<dbReference type="Pfam" id="PF00006">
    <property type="entry name" value="ATP-synt_ab"/>
    <property type="match status" value="1"/>
</dbReference>
<dbReference type="Pfam" id="PF18269">
    <property type="entry name" value="T3SS_ATPase_C"/>
    <property type="match status" value="1"/>
</dbReference>
<dbReference type="SMART" id="SM00382">
    <property type="entry name" value="AAA"/>
    <property type="match status" value="1"/>
</dbReference>
<dbReference type="SUPFAM" id="SSF52540">
    <property type="entry name" value="P-loop containing nucleoside triphosphate hydrolases"/>
    <property type="match status" value="1"/>
</dbReference>
<dbReference type="PROSITE" id="PS00152">
    <property type="entry name" value="ATPASE_ALPHA_BETA"/>
    <property type="match status" value="1"/>
</dbReference>
<reference key="1">
    <citation type="journal article" date="1991" name="J. Bacteriol.">
        <title>Salmonella typhimurium mutants defective in flagellar filament regrowth and sequence similarity of FliI to F0F1, vacuolar, and archaebacterial ATPase subunits.</title>
        <authorList>
            <person name="Vogler A.P."/>
            <person name="Homma M."/>
            <person name="Irikura V.M."/>
            <person name="Macnab R.M."/>
        </authorList>
    </citation>
    <scope>NUCLEOTIDE SEQUENCE [GENOMIC DNA]</scope>
</reference>
<reference key="2">
    <citation type="journal article" date="2001" name="Nature">
        <title>Complete genome sequence of Salmonella enterica serovar Typhimurium LT2.</title>
        <authorList>
            <person name="McClelland M."/>
            <person name="Sanderson K.E."/>
            <person name="Spieth J."/>
            <person name="Clifton S.W."/>
            <person name="Latreille P."/>
            <person name="Courtney L."/>
            <person name="Porwollik S."/>
            <person name="Ali J."/>
            <person name="Dante M."/>
            <person name="Du F."/>
            <person name="Hou S."/>
            <person name="Layman D."/>
            <person name="Leonard S."/>
            <person name="Nguyen C."/>
            <person name="Scott K."/>
            <person name="Holmes A."/>
            <person name="Grewal N."/>
            <person name="Mulvaney E."/>
            <person name="Ryan E."/>
            <person name="Sun H."/>
            <person name="Florea L."/>
            <person name="Miller W."/>
            <person name="Stoneking T."/>
            <person name="Nhan M."/>
            <person name="Waterston R."/>
            <person name="Wilson R.K."/>
        </authorList>
    </citation>
    <scope>NUCLEOTIDE SEQUENCE [LARGE SCALE GENOMIC DNA]</scope>
    <source>
        <strain>LT2 / SGSC1412 / ATCC 700720</strain>
    </source>
</reference>
<reference key="3">
    <citation type="journal article" date="1993" name="J. Bacteriol.">
        <title>Genetic and biochemical analysis of Salmonella typhimurium FliI, a flagellar protein related to the catalytic subunit of the F0F1 ATPase and to virulence proteins of mammalian and plant pathogens.</title>
        <authorList>
            <person name="Dreyfus G."/>
            <person name="Williams A.W."/>
            <person name="Kawagishi I."/>
            <person name="Macnab R.M."/>
        </authorList>
    </citation>
    <scope>CHARACTERIZATION</scope>
    <scope>MUTAGENESIS</scope>
</reference>
<evidence type="ECO:0000250" key="1"/>
<evidence type="ECO:0000255" key="2">
    <source>
        <dbReference type="PROSITE-ProRule" id="PRU10106"/>
    </source>
</evidence>
<evidence type="ECO:0000269" key="3">
    <source>
    </source>
</evidence>
<evidence type="ECO:0000305" key="4"/>
<evidence type="ECO:0007829" key="5">
    <source>
        <dbReference type="PDB" id="2DPY"/>
    </source>
</evidence>
<evidence type="ECO:0007829" key="6">
    <source>
        <dbReference type="PDB" id="5B0O"/>
    </source>
</evidence>
<protein>
    <recommendedName>
        <fullName>Flagellum-specific ATP synthase</fullName>
        <ecNumber>7.1.2.2</ecNumber>
    </recommendedName>
</protein>
<proteinExistence type="evidence at protein level"/>
<keyword id="KW-0002">3D-structure</keyword>
<keyword id="KW-0066">ATP synthesis</keyword>
<keyword id="KW-0067">ATP-binding</keyword>
<keyword id="KW-1005">Bacterial flagellum biogenesis</keyword>
<keyword id="KW-1006">Bacterial flagellum protein export</keyword>
<keyword id="KW-0963">Cytoplasm</keyword>
<keyword id="KW-0375">Hydrogen ion transport</keyword>
<keyword id="KW-0406">Ion transport</keyword>
<keyword id="KW-0547">Nucleotide-binding</keyword>
<keyword id="KW-0653">Protein transport</keyword>
<keyword id="KW-1185">Reference proteome</keyword>
<keyword id="KW-1278">Translocase</keyword>
<keyword id="KW-0813">Transport</keyword>
<gene>
    <name type="primary">fliI</name>
    <name type="synonym">fla AIII</name>
    <name type="synonym">flaC</name>
    <name type="ordered locus">STM1972</name>
</gene>
<feature type="chain" id="PRO_0000144695" description="Flagellum-specific ATP synthase">
    <location>
        <begin position="1"/>
        <end position="456"/>
    </location>
</feature>
<feature type="binding site" evidence="1">
    <location>
        <begin position="182"/>
        <end position="189"/>
    </location>
    <ligand>
        <name>ATP</name>
        <dbReference type="ChEBI" id="CHEBI:30616"/>
    </ligand>
</feature>
<feature type="mutagenesis site" description="Loss of flagellum." evidence="3">
    <original>K</original>
    <variation>E</variation>
    <location>
        <position position="188"/>
    </location>
</feature>
<feature type="mutagenesis site" description="Loss of flagellum." evidence="3">
    <original>K</original>
    <variation>I</variation>
    <location>
        <position position="188"/>
    </location>
</feature>
<feature type="mutagenesis site" description="Loss of flagellum." evidence="3">
    <original>D</original>
    <variation>N</variation>
    <location>
        <position position="272"/>
    </location>
</feature>
<feature type="mutagenesis site" description="Loss of flagellum." evidence="3">
    <original>Y</original>
    <variation>S</variation>
    <location>
        <position position="363"/>
    </location>
</feature>
<feature type="helix" evidence="6">
    <location>
        <begin position="3"/>
        <end position="19"/>
    </location>
</feature>
<feature type="strand" evidence="5">
    <location>
        <begin position="29"/>
        <end position="33"/>
    </location>
</feature>
<feature type="strand" evidence="5">
    <location>
        <begin position="35"/>
        <end position="43"/>
    </location>
</feature>
<feature type="strand" evidence="5">
    <location>
        <begin position="51"/>
        <end position="56"/>
    </location>
</feature>
<feature type="strand" evidence="5">
    <location>
        <begin position="63"/>
        <end position="71"/>
    </location>
</feature>
<feature type="strand" evidence="5">
    <location>
        <begin position="77"/>
        <end position="83"/>
    </location>
</feature>
<feature type="strand" evidence="5">
    <location>
        <begin position="92"/>
        <end position="96"/>
    </location>
</feature>
<feature type="turn" evidence="6">
    <location>
        <begin position="99"/>
        <end position="102"/>
    </location>
</feature>
<feature type="strand" evidence="5">
    <location>
        <begin position="109"/>
        <end position="111"/>
    </location>
</feature>
<feature type="helix" evidence="5">
    <location>
        <begin position="114"/>
        <end position="116"/>
    </location>
</feature>
<feature type="strand" evidence="5">
    <location>
        <begin position="119"/>
        <end position="121"/>
    </location>
</feature>
<feature type="strand" evidence="5">
    <location>
        <begin position="127"/>
        <end position="131"/>
    </location>
</feature>
<feature type="strand" evidence="5">
    <location>
        <begin position="139"/>
        <end position="142"/>
    </location>
</feature>
<feature type="helix" evidence="6">
    <location>
        <begin position="149"/>
        <end position="151"/>
    </location>
</feature>
<feature type="helix" evidence="5">
    <location>
        <begin position="164"/>
        <end position="169"/>
    </location>
</feature>
<feature type="strand" evidence="5">
    <location>
        <begin position="177"/>
        <end position="182"/>
    </location>
</feature>
<feature type="helix" evidence="5">
    <location>
        <begin position="188"/>
        <end position="198"/>
    </location>
</feature>
<feature type="strand" evidence="5">
    <location>
        <begin position="202"/>
        <end position="210"/>
    </location>
</feature>
<feature type="helix" evidence="5">
    <location>
        <begin position="213"/>
        <end position="221"/>
    </location>
</feature>
<feature type="turn" evidence="5">
    <location>
        <begin position="222"/>
        <end position="224"/>
    </location>
</feature>
<feature type="helix" evidence="5">
    <location>
        <begin position="225"/>
        <end position="230"/>
    </location>
</feature>
<feature type="strand" evidence="5">
    <location>
        <begin position="232"/>
        <end position="237"/>
    </location>
</feature>
<feature type="strand" evidence="6">
    <location>
        <begin position="239"/>
        <end position="241"/>
    </location>
</feature>
<feature type="helix" evidence="5">
    <location>
        <begin position="243"/>
        <end position="261"/>
    </location>
</feature>
<feature type="turn" evidence="5">
    <location>
        <begin position="262"/>
        <end position="264"/>
    </location>
</feature>
<feature type="strand" evidence="5">
    <location>
        <begin position="266"/>
        <end position="272"/>
    </location>
</feature>
<feature type="helix" evidence="5">
    <location>
        <begin position="274"/>
        <end position="287"/>
    </location>
</feature>
<feature type="strand" evidence="5">
    <location>
        <begin position="294"/>
        <end position="296"/>
    </location>
</feature>
<feature type="helix" evidence="5">
    <location>
        <begin position="301"/>
        <end position="309"/>
    </location>
</feature>
<feature type="strand" evidence="5">
    <location>
        <begin position="321"/>
        <end position="329"/>
    </location>
</feature>
<feature type="strand" evidence="5">
    <location>
        <begin position="331"/>
        <end position="333"/>
    </location>
</feature>
<feature type="helix" evidence="5">
    <location>
        <begin position="338"/>
        <end position="346"/>
    </location>
</feature>
<feature type="strand" evidence="5">
    <location>
        <begin position="347"/>
        <end position="353"/>
    </location>
</feature>
<feature type="helix" evidence="5">
    <location>
        <begin position="355"/>
        <end position="359"/>
    </location>
</feature>
<feature type="strand" evidence="5">
    <location>
        <begin position="366"/>
        <end position="373"/>
    </location>
</feature>
<feature type="helix" evidence="5">
    <location>
        <begin position="376"/>
        <end position="379"/>
    </location>
</feature>
<feature type="helix" evidence="5">
    <location>
        <begin position="382"/>
        <end position="400"/>
    </location>
</feature>
<feature type="helix" evidence="5">
    <location>
        <begin position="401"/>
        <end position="403"/>
    </location>
</feature>
<feature type="strand" evidence="5">
    <location>
        <begin position="405"/>
        <end position="408"/>
    </location>
</feature>
<feature type="helix" evidence="5">
    <location>
        <begin position="416"/>
        <end position="422"/>
    </location>
</feature>
<feature type="helix" evidence="5">
    <location>
        <begin position="425"/>
        <end position="432"/>
    </location>
</feature>
<feature type="helix" evidence="5">
    <location>
        <begin position="442"/>
        <end position="452"/>
    </location>
</feature>
<name>FLII_SALTY</name>
<comment type="function">
    <text>Probable catalytic subunit of a protein translocase for flagellum-specific export, or a proton translocase involved in local circuits at the flagellum. May be involved in a specialized protein export pathway that proceeds without signal peptide cleavage.</text>
</comment>
<comment type="catalytic activity">
    <reaction evidence="2">
        <text>ATP + H2O + 4 H(+)(in) = ADP + phosphate + 5 H(+)(out)</text>
        <dbReference type="Rhea" id="RHEA:57720"/>
        <dbReference type="ChEBI" id="CHEBI:15377"/>
        <dbReference type="ChEBI" id="CHEBI:15378"/>
        <dbReference type="ChEBI" id="CHEBI:30616"/>
        <dbReference type="ChEBI" id="CHEBI:43474"/>
        <dbReference type="ChEBI" id="CHEBI:456216"/>
        <dbReference type="EC" id="7.1.2.2"/>
    </reaction>
</comment>
<comment type="interaction">
    <interactant intactId="EBI-6515439">
        <id>P26465</id>
    </interactant>
    <interactant intactId="EBI-6515439">
        <id>P26465</id>
        <label>fliI</label>
    </interactant>
    <organismsDiffer>false</organismsDiffer>
    <experiments>2</experiments>
</comment>
<comment type="interaction">
    <interactant intactId="EBI-6515439">
        <id>P26465</id>
    </interactant>
    <interactant intactId="EBI-6410293">
        <id>P0A1K1</id>
        <label>fliJ</label>
    </interactant>
    <organismsDiffer>false</organismsDiffer>
    <experiments>3</experiments>
</comment>
<comment type="interaction">
    <interactant intactId="EBI-6515439">
        <id>P26465</id>
    </interactant>
    <interactant intactId="EBI-15610664">
        <id>P0A1N2</id>
        <label>fliT</label>
    </interactant>
    <organismsDiffer>false</organismsDiffer>
    <experiments>2</experiments>
</comment>
<comment type="subcellular location">
    <subcellularLocation>
        <location evidence="4">Cytoplasm</location>
    </subcellularLocation>
</comment>
<comment type="similarity">
    <text evidence="4">Belongs to the ATPase alpha/beta chains family.</text>
</comment>